<comment type="function">
    <text evidence="1 5 6 7 8">Part of the dynactin complex that activates the molecular motor dynein for ultra-processive transport along microtubules. In the dynactin soulder domain, binds the ACTR1A filament and acts as a molecular ruler to determine the length (PubMed:25814576, PubMed:29420470, PubMed:33734450, PubMed:36071160). Modulates cytoplasmic dynein binding to an organelle, and plays a role in prometaphase chromosome alignment and spindle organization during mitosis. Involved in anchoring microtubules to centrosomes. May play a role in synapse formation during brain development (By similarity).</text>
</comment>
<comment type="subunit">
    <text evidence="1 2 5 6 7 8">Subunit of dynactin, a multiprotein complex part of a tripartite complex with dynein and a adapter, such as BICDL1, BICD2 or HOOK3 (PubMed:25814576, PubMed:29420470, PubMed:33734450, PubMed:36071160). The dynactin complex is built around ACTR1A/ACTB filament and consists of an actin-related filament composed of a shoulder domain, a pointed end and a barbed end. Its length is defined by its flexible shoulder domain. The soulder is composed of 2 DCTN1 subunits, 4 DCTN2 and 2 DCTN3. The 4 DCNT2 (via N-terminus) bind the ACTR1A filament and act as molecular rulers to determine the length. The pointed end is important for binding dynein-dynactin cargo adapters and consists of 4 subunits: ACTR10, DCNT4, DCTN5 and DCTN6 (PubMed:33734450). The barbed end is composed of a CAPZA1:CAPZB heterodimers, which binds ACTR1A/ACTB filament and dynactin and stabilizes dynactin (PubMed:25814576, PubMed:29420470, PubMed:33734450, PubMed:36071160). Interacts with BICD2 and CEP135 (By similarity). Interacts with DYNAP. Interacts with ECPAS. Interacts with MAPRE1 (By similarity).</text>
</comment>
<comment type="subcellular location">
    <subcellularLocation>
        <location evidence="10">Cytoplasm</location>
        <location evidence="10">Cytoskeleton</location>
    </subcellularLocation>
    <subcellularLocation>
        <location evidence="1">Cytoplasm</location>
        <location evidence="1">Cytoskeleton</location>
        <location evidence="1">Microtubule organizing center</location>
        <location evidence="1">Centrosome</location>
    </subcellularLocation>
    <subcellularLocation>
        <location evidence="1">Membrane</location>
        <topology evidence="1">Peripheral membrane protein</topology>
    </subcellularLocation>
</comment>
<comment type="similarity">
    <text evidence="9">Belongs to the dynactin subunit 2 family.</text>
</comment>
<dbReference type="EMBL" id="AEMK02000033">
    <property type="status" value="NOT_ANNOTATED_CDS"/>
    <property type="molecule type" value="Genomic_DNA"/>
</dbReference>
<dbReference type="RefSeq" id="XP_020947539.1">
    <property type="nucleotide sequence ID" value="XM_021091880.1"/>
</dbReference>
<dbReference type="PDB" id="5ADX">
    <property type="method" value="EM"/>
    <property type="resolution" value="4.00 A"/>
    <property type="chains" value="a=1-48"/>
</dbReference>
<dbReference type="PDB" id="5AFU">
    <property type="method" value="EM"/>
    <property type="resolution" value="3.50 A"/>
    <property type="chains" value="a=1-48"/>
</dbReference>
<dbReference type="PDB" id="5NW4">
    <property type="method" value="EM"/>
    <property type="resolution" value="8.70 A"/>
    <property type="chains" value="k=1-48"/>
</dbReference>
<dbReference type="PDB" id="6F1T">
    <property type="method" value="EM"/>
    <property type="resolution" value="3.50 A"/>
    <property type="chains" value="a=1-66, b=1-89, c=1-50, d=1-26"/>
</dbReference>
<dbReference type="PDB" id="6F1U">
    <property type="method" value="EM"/>
    <property type="resolution" value="3.40 A"/>
    <property type="chains" value="c=1-50, d=1-26"/>
</dbReference>
<dbReference type="PDB" id="6F38">
    <property type="method" value="EM"/>
    <property type="resolution" value="6.70 A"/>
    <property type="chains" value="a=1-68, b=1-90, d=1-29"/>
</dbReference>
<dbReference type="PDB" id="6F3A">
    <property type="method" value="EM"/>
    <property type="resolution" value="8.20 A"/>
    <property type="chains" value="a=1-68, b/c/d=1-89"/>
</dbReference>
<dbReference type="PDB" id="6ZNL">
    <property type="method" value="EM"/>
    <property type="resolution" value="3.80 A"/>
    <property type="chains" value="M/N/m/n=1-405"/>
</dbReference>
<dbReference type="PDB" id="6ZNM">
    <property type="method" value="EM"/>
    <property type="resolution" value="4.10 A"/>
    <property type="chains" value="M=1-405"/>
</dbReference>
<dbReference type="PDB" id="6ZNN">
    <property type="method" value="EM"/>
    <property type="resolution" value="4.50 A"/>
    <property type="chains" value="M=1-405"/>
</dbReference>
<dbReference type="PDB" id="6ZNO">
    <property type="method" value="EM"/>
    <property type="resolution" value="6.80 A"/>
    <property type="chains" value="M=1-405"/>
</dbReference>
<dbReference type="PDB" id="6ZO4">
    <property type="method" value="EM"/>
    <property type="resolution" value="8.20 A"/>
    <property type="chains" value="M=1-405"/>
</dbReference>
<dbReference type="PDB" id="7Z8F">
    <property type="method" value="EM"/>
    <property type="resolution" value="20.00 A"/>
    <property type="chains" value="M/N/P/Q=1-405"/>
</dbReference>
<dbReference type="PDB" id="7Z8M">
    <property type="method" value="EM"/>
    <property type="resolution" value="3.37 A"/>
    <property type="chains" value="M=1-405"/>
</dbReference>
<dbReference type="PDB" id="8PTK">
    <property type="method" value="EM"/>
    <property type="resolution" value="10.00 A"/>
    <property type="chains" value="M/N/P/Q=1-405"/>
</dbReference>
<dbReference type="PDBsum" id="5ADX"/>
<dbReference type="PDBsum" id="5AFU"/>
<dbReference type="PDBsum" id="5NW4"/>
<dbReference type="PDBsum" id="6F1T"/>
<dbReference type="PDBsum" id="6F1U"/>
<dbReference type="PDBsum" id="6F38"/>
<dbReference type="PDBsum" id="6F3A"/>
<dbReference type="PDBsum" id="6ZNL"/>
<dbReference type="PDBsum" id="6ZNM"/>
<dbReference type="PDBsum" id="6ZNN"/>
<dbReference type="PDBsum" id="6ZNO"/>
<dbReference type="PDBsum" id="6ZO4"/>
<dbReference type="PDBsum" id="7Z8F"/>
<dbReference type="PDBsum" id="7Z8M"/>
<dbReference type="PDBsum" id="8PTK"/>
<dbReference type="EMDB" id="EMD-11313"/>
<dbReference type="EMDB" id="EMD-11317"/>
<dbReference type="EMDB" id="EMD-11318"/>
<dbReference type="EMDB" id="EMD-11319"/>
<dbReference type="EMDB" id="EMD-14549"/>
<dbReference type="EMDB" id="EMD-14559"/>
<dbReference type="EMDB" id="EMD-17873"/>
<dbReference type="EMDB" id="EMD-2856"/>
<dbReference type="EMDB" id="EMD-2857"/>
<dbReference type="EMDB" id="EMD-4168"/>
<dbReference type="EMDB" id="EMD-4169"/>
<dbReference type="EMDB" id="EMD-4177"/>
<dbReference type="SMR" id="A0A5G2QD80"/>
<dbReference type="CORUM" id="A0A5G2QD80"/>
<dbReference type="Ensembl" id="ENSSSCT00000073581.1">
    <property type="protein sequence ID" value="ENSSSCP00000062086.1"/>
    <property type="gene ID" value="ENSSSCG00000000444.5"/>
</dbReference>
<dbReference type="Ensembl" id="ENSSSCT00015009461.1">
    <property type="protein sequence ID" value="ENSSSCP00015003769.1"/>
    <property type="gene ID" value="ENSSSCG00015006289.1"/>
</dbReference>
<dbReference type="Ensembl" id="ENSSSCT00025029984.1">
    <property type="protein sequence ID" value="ENSSSCP00025012749.1"/>
    <property type="gene ID" value="ENSSSCG00025021535.1"/>
</dbReference>
<dbReference type="Ensembl" id="ENSSSCT00030063674.1">
    <property type="protein sequence ID" value="ENSSSCP00030029145.1"/>
    <property type="gene ID" value="ENSSSCG00030045425.1"/>
</dbReference>
<dbReference type="Ensembl" id="ENSSSCT00035105780.1">
    <property type="protein sequence ID" value="ENSSSCP00035045485.1"/>
    <property type="gene ID" value="ENSSSCG00035077234.1"/>
</dbReference>
<dbReference type="Ensembl" id="ENSSSCT00040017952.1">
    <property type="protein sequence ID" value="ENSSSCP00040007353.1"/>
    <property type="gene ID" value="ENSSSCG00040013354.1"/>
</dbReference>
<dbReference type="Ensembl" id="ENSSSCT00045065774.1">
    <property type="protein sequence ID" value="ENSSSCP00045046567.1"/>
    <property type="gene ID" value="ENSSSCG00045037624.1"/>
</dbReference>
<dbReference type="Ensembl" id="ENSSSCT00050016520.1">
    <property type="protein sequence ID" value="ENSSSCP00050006777.1"/>
    <property type="gene ID" value="ENSSSCG00050012221.1"/>
</dbReference>
<dbReference type="Ensembl" id="ENSSSCT00055050460.1">
    <property type="protein sequence ID" value="ENSSSCP00055040343.1"/>
    <property type="gene ID" value="ENSSSCG00055024560.1"/>
</dbReference>
<dbReference type="Ensembl" id="ENSSSCT00060067432.1">
    <property type="protein sequence ID" value="ENSSSCP00060028902.1"/>
    <property type="gene ID" value="ENSSSCG00060049547.1"/>
</dbReference>
<dbReference type="Ensembl" id="ENSSSCT00065047656.1">
    <property type="protein sequence ID" value="ENSSSCP00065020535.1"/>
    <property type="gene ID" value="ENSSSCG00065034882.1"/>
</dbReference>
<dbReference type="Ensembl" id="ENSSSCT00070058377.1">
    <property type="protein sequence ID" value="ENSSSCP00070049640.1"/>
    <property type="gene ID" value="ENSSSCG00070029079.1"/>
</dbReference>
<dbReference type="Ensembl" id="ENSSSCT00090023094">
    <property type="protein sequence ID" value="ENSSSCP00090014135"/>
    <property type="gene ID" value="ENSSSCG00090013177"/>
</dbReference>
<dbReference type="Ensembl" id="ENSSSCT00105073047">
    <property type="protein sequence ID" value="ENSSSCP00105051903"/>
    <property type="gene ID" value="ENSSSCG00105038043"/>
</dbReference>
<dbReference type="Ensembl" id="ENSSSCT00110075455">
    <property type="protein sequence ID" value="ENSSSCP00110053224"/>
    <property type="gene ID" value="ENSSSCG00110039461"/>
</dbReference>
<dbReference type="Ensembl" id="ENSSSCT00115035640">
    <property type="protein sequence ID" value="ENSSSCP00115033795"/>
    <property type="gene ID" value="ENSSSCG00115020040"/>
</dbReference>
<dbReference type="Ensembl" id="ENSSSCT00130023862">
    <property type="protein sequence ID" value="ENSSSCP00130025235"/>
    <property type="gene ID" value="ENSSSCG00130013449"/>
</dbReference>
<dbReference type="GeneID" id="100515661"/>
<dbReference type="VGNC" id="VGNC:87193">
    <property type="gene designation" value="DCTN2"/>
</dbReference>
<dbReference type="eggNOG" id="KOG3958">
    <property type="taxonomic scope" value="Eukaryota"/>
</dbReference>
<dbReference type="GeneTree" id="ENSGT00390000003427"/>
<dbReference type="HOGENOM" id="CLU_049964_1_0_1"/>
<dbReference type="Reactome" id="R-SSC-2132295">
    <property type="pathway name" value="MHC class II antigen presentation"/>
</dbReference>
<dbReference type="Reactome" id="R-SSC-2565942">
    <property type="pathway name" value="Regulation of PLK1 Activity at G2/M Transition"/>
</dbReference>
<dbReference type="Reactome" id="R-SSC-3371497">
    <property type="pathway name" value="HSP90 chaperone cycle for steroid hormone receptors (SHR) in the presence of ligand"/>
</dbReference>
<dbReference type="Reactome" id="R-SSC-380259">
    <property type="pathway name" value="Loss of Nlp from mitotic centrosomes"/>
</dbReference>
<dbReference type="Reactome" id="R-SSC-380270">
    <property type="pathway name" value="Recruitment of mitotic centrosome proteins and complexes"/>
</dbReference>
<dbReference type="Reactome" id="R-SSC-380284">
    <property type="pathway name" value="Loss of proteins required for interphase microtubule organization from the centrosome"/>
</dbReference>
<dbReference type="Reactome" id="R-SSC-380320">
    <property type="pathway name" value="Recruitment of NuMA to mitotic centrosomes"/>
</dbReference>
<dbReference type="Reactome" id="R-SSC-5620912">
    <property type="pathway name" value="Anchoring of the basal body to the plasma membrane"/>
</dbReference>
<dbReference type="Reactome" id="R-SSC-6807878">
    <property type="pathway name" value="COPI-mediated anterograde transport"/>
</dbReference>
<dbReference type="Reactome" id="R-SSC-8854518">
    <property type="pathway name" value="AURKA Activation by TPX2"/>
</dbReference>
<dbReference type="Proteomes" id="UP000008227">
    <property type="component" value="Chromosome 5"/>
</dbReference>
<dbReference type="Proteomes" id="UP000314985">
    <property type="component" value="Chromosome 5"/>
</dbReference>
<dbReference type="Proteomes" id="UP000694570">
    <property type="component" value="Unplaced"/>
</dbReference>
<dbReference type="Proteomes" id="UP000694571">
    <property type="component" value="Unplaced"/>
</dbReference>
<dbReference type="Proteomes" id="UP000694720">
    <property type="component" value="Unplaced"/>
</dbReference>
<dbReference type="Proteomes" id="UP000694722">
    <property type="component" value="Unplaced"/>
</dbReference>
<dbReference type="Proteomes" id="UP000694723">
    <property type="component" value="Unplaced"/>
</dbReference>
<dbReference type="Proteomes" id="UP000694724">
    <property type="component" value="Unplaced"/>
</dbReference>
<dbReference type="Proteomes" id="UP000694725">
    <property type="component" value="Unplaced"/>
</dbReference>
<dbReference type="Proteomes" id="UP000694726">
    <property type="component" value="Unplaced"/>
</dbReference>
<dbReference type="Proteomes" id="UP000694727">
    <property type="component" value="Unplaced"/>
</dbReference>
<dbReference type="Proteomes" id="UP000694728">
    <property type="component" value="Unplaced"/>
</dbReference>
<dbReference type="Bgee" id="ENSSSCG00000000444">
    <property type="expression patterns" value="Expressed in subcutaneous adipose tissue and 43 other cell types or tissues"/>
</dbReference>
<dbReference type="ExpressionAtlas" id="A0A5G2QD80">
    <property type="expression patterns" value="baseline and differential"/>
</dbReference>
<dbReference type="GO" id="GO:0005813">
    <property type="term" value="C:centrosome"/>
    <property type="evidence" value="ECO:0000318"/>
    <property type="project" value="GO_Central"/>
</dbReference>
<dbReference type="GO" id="GO:0005737">
    <property type="term" value="C:cytoplasm"/>
    <property type="evidence" value="ECO:0000318"/>
    <property type="project" value="GO_Central"/>
</dbReference>
<dbReference type="GO" id="GO:0005869">
    <property type="term" value="C:dynactin complex"/>
    <property type="evidence" value="ECO:0000318"/>
    <property type="project" value="GO_Central"/>
</dbReference>
<dbReference type="GO" id="GO:0030286">
    <property type="term" value="C:dynein complex"/>
    <property type="evidence" value="ECO:0007669"/>
    <property type="project" value="UniProtKB-KW"/>
</dbReference>
<dbReference type="GO" id="GO:0016020">
    <property type="term" value="C:membrane"/>
    <property type="evidence" value="ECO:0007669"/>
    <property type="project" value="UniProtKB-SubCell"/>
</dbReference>
<dbReference type="GO" id="GO:0005874">
    <property type="term" value="C:microtubule"/>
    <property type="evidence" value="ECO:0007669"/>
    <property type="project" value="UniProtKB-KW"/>
</dbReference>
<dbReference type="GO" id="GO:0007052">
    <property type="term" value="P:mitotic spindle organization"/>
    <property type="evidence" value="ECO:0000318"/>
    <property type="project" value="GO_Central"/>
</dbReference>
<dbReference type="InterPro" id="IPR028133">
    <property type="entry name" value="Dynamitin"/>
</dbReference>
<dbReference type="PANTHER" id="PTHR15346">
    <property type="entry name" value="DYNACTIN SUBUNIT"/>
    <property type="match status" value="1"/>
</dbReference>
<dbReference type="Pfam" id="PF04912">
    <property type="entry name" value="Dynamitin"/>
    <property type="match status" value="1"/>
</dbReference>
<accession>A0A5G2QD80</accession>
<accession>A0A4X1W6J2</accession>
<accession>F1SKF9</accession>
<gene>
    <name type="primary">DCTN2</name>
</gene>
<reference evidence="11" key="1">
    <citation type="submission" date="2009-11" db="EMBL/GenBank/DDBJ databases">
        <authorList>
            <consortium name="Porcine genome sequencing project"/>
        </authorList>
    </citation>
    <scope>NUCLEOTIDE SEQUENCE [LARGE SCALE GENOMIC DNA]</scope>
    <source>
        <strain evidence="11">Duroc</strain>
    </source>
</reference>
<reference evidence="12 13" key="2">
    <citation type="journal article" date="2015" name="Science">
        <title>The structure of the dynactin complex and its interaction with dynein.</title>
        <authorList>
            <person name="Urnavicius L."/>
            <person name="Zhang K."/>
            <person name="Diamant A.G."/>
            <person name="Motz C."/>
            <person name="Schlager M.A."/>
            <person name="Yu M."/>
            <person name="Patel N.A."/>
            <person name="Robinson C.V."/>
            <person name="Carter A.P."/>
        </authorList>
    </citation>
    <scope>STRUCTURE BY ELECTRON MICROSCOPY (4.00 ANGSTROMS) OF 1-71 AND 1-20</scope>
    <scope>SUBUNIT</scope>
    <scope>FUNCTION</scope>
</reference>
<reference evidence="14 15" key="3">
    <citation type="journal article" date="2018" name="Nature">
        <title>Cryo-EM shows how dynactin recruits two dyneins for faster movement.</title>
        <authorList>
            <person name="Urnavicius L."/>
            <person name="Lau C.K."/>
            <person name="Elshenawy M.M."/>
            <person name="Morales-Rios E."/>
            <person name="Motz C."/>
            <person name="Yildiz A."/>
            <person name="Carter A.P."/>
        </authorList>
    </citation>
    <scope>STRUCTURE BY ELECTRON MICROSCOPY (3.40 ANGSTROMS) OF 1-50</scope>
    <scope>SUBUNIT</scope>
    <scope>FUNCTION</scope>
</reference>
<reference evidence="16 17 18 19 20" key="4">
    <citation type="journal article" date="2021" name="EMBO J.">
        <title>Cryo-EM reveals the complex architecture of dynactin's shoulder region and pointed end.</title>
        <authorList>
            <person name="Lau C.K."/>
            <person name="O'Reilly F.J."/>
            <person name="Santhanam B."/>
            <person name="Lacey S.E."/>
            <person name="Rappsilber J."/>
            <person name="Carter A.P."/>
        </authorList>
    </citation>
    <scope>STRUCTURE BY ELECTRON MICROSCOPY (3.80 ANGSTROMS)</scope>
    <scope>SUBUNIT</scope>
    <scope>FUNCTION</scope>
</reference>
<reference evidence="21" key="5">
    <citation type="journal article" date="2022" name="Nature">
        <title>Structure of dynein-dynactin on microtubules shows tandem adaptor binding.</title>
        <authorList>
            <person name="Chaaban S."/>
            <person name="Carter A.P."/>
        </authorList>
    </citation>
    <scope>STRUCTURE BY ELECTRON MICROSCOPY (20.00 ANGSTROMS)</scope>
    <scope>SUBUNIT</scope>
    <scope>FUNCTION</scope>
</reference>
<organism evidence="11">
    <name type="scientific">Sus scrofa</name>
    <name type="common">Pig</name>
    <dbReference type="NCBI Taxonomy" id="9823"/>
    <lineage>
        <taxon>Eukaryota</taxon>
        <taxon>Metazoa</taxon>
        <taxon>Chordata</taxon>
        <taxon>Craniata</taxon>
        <taxon>Vertebrata</taxon>
        <taxon>Euteleostomi</taxon>
        <taxon>Mammalia</taxon>
        <taxon>Eutheria</taxon>
        <taxon>Laurasiatheria</taxon>
        <taxon>Artiodactyla</taxon>
        <taxon>Suina</taxon>
        <taxon>Suidae</taxon>
        <taxon>Sus</taxon>
    </lineage>
</organism>
<sequence length="405" mass="44650">MADPKYADLPGIARNEPDVYETSDLPEDDQAEFDAELEELTSTSVEHIIVNPNAAYDKFKDKRVGTKGLDFSDRIGKTKRTGYESGEYEMLGEGLGVKETPQQKYQRLLHEVQELTTEVEKIKMTVKESATEEKLTPVVLAKQLAALKQQLVASHLEKLLGPDAAINLTDPDGALAKRLLLQLEATKNTKGAGSGGKTTSGSPPDSSLVTYELHSRPEQDKFSQAAKVAELEKRLTELEATVRCDQDAQNPLSAGLQGACLMETVELLQAKVSALDLAVLDQVEARLQSVLGKVNEIAKHKASVEDADTQSKVHQLYETIQRWSPIASTLPELVQRLVTIKQLHEQAMQFGQLLTHLDTTQQMIACSLKDNATLLTQVQTTMRENLSTVEGNFANIDERMKKLGK</sequence>
<name>DCTN2_PIG</name>
<feature type="initiator methionine" description="Removed" evidence="1">
    <location>
        <position position="1"/>
    </location>
</feature>
<feature type="chain" id="PRO_0000457462" description="Dynactin subunit 2" evidence="1">
    <location>
        <begin position="2"/>
        <end position="405"/>
    </location>
</feature>
<feature type="region of interest" description="Disordered" evidence="4">
    <location>
        <begin position="1"/>
        <end position="25"/>
    </location>
</feature>
<feature type="region of interest" description="Disordered" evidence="4">
    <location>
        <begin position="187"/>
        <end position="207"/>
    </location>
</feature>
<feature type="coiled-coil region" evidence="3">
    <location>
        <begin position="105"/>
        <end position="132"/>
    </location>
</feature>
<feature type="modified residue" description="N-acetylalanine" evidence="1">
    <location>
        <position position="2"/>
    </location>
</feature>
<feature type="modified residue" description="Phosphotyrosine" evidence="1">
    <location>
        <position position="6"/>
    </location>
</feature>
<feature type="modified residue" description="Phosphoserine" evidence="1">
    <location>
        <position position="85"/>
    </location>
</feature>
<feature type="modified residue" description="Phosphotyrosine" evidence="2">
    <location>
        <position position="88"/>
    </location>
</feature>
<feature type="modified residue" description="Phosphothreonine" evidence="1">
    <location>
        <position position="136"/>
    </location>
</feature>
<feature type="modified residue" description="Phosphoserine" evidence="2">
    <location>
        <position position="324"/>
    </location>
</feature>
<feature type="helix" evidence="24">
    <location>
        <begin position="4"/>
        <end position="6"/>
    </location>
</feature>
<feature type="strand" evidence="23">
    <location>
        <begin position="8"/>
        <end position="10"/>
    </location>
</feature>
<feature type="strand" evidence="24">
    <location>
        <begin position="18"/>
        <end position="21"/>
    </location>
</feature>
<feature type="helix" evidence="22">
    <location>
        <begin position="38"/>
        <end position="41"/>
    </location>
</feature>
<feature type="strand" evidence="23">
    <location>
        <begin position="45"/>
        <end position="47"/>
    </location>
</feature>
<feature type="helix" evidence="22">
    <location>
        <begin position="52"/>
        <end position="58"/>
    </location>
</feature>
<feature type="strand" evidence="22">
    <location>
        <begin position="59"/>
        <end position="61"/>
    </location>
</feature>
<feature type="strand" evidence="22">
    <location>
        <begin position="76"/>
        <end position="78"/>
    </location>
</feature>
<evidence type="ECO:0000250" key="1">
    <source>
        <dbReference type="UniProtKB" id="Q13561"/>
    </source>
</evidence>
<evidence type="ECO:0000250" key="2">
    <source>
        <dbReference type="UniProtKB" id="Q99KJ8"/>
    </source>
</evidence>
<evidence type="ECO:0000255" key="3"/>
<evidence type="ECO:0000256" key="4">
    <source>
        <dbReference type="SAM" id="MobiDB-lite"/>
    </source>
</evidence>
<evidence type="ECO:0000269" key="5">
    <source>
    </source>
</evidence>
<evidence type="ECO:0000269" key="6">
    <source>
    </source>
</evidence>
<evidence type="ECO:0000269" key="7">
    <source>
    </source>
</evidence>
<evidence type="ECO:0000269" key="8">
    <source>
    </source>
</evidence>
<evidence type="ECO:0000305" key="9"/>
<evidence type="ECO:0000305" key="10">
    <source>
    </source>
</evidence>
<evidence type="ECO:0000312" key="11">
    <source>
        <dbReference type="Proteomes" id="UP000008227"/>
    </source>
</evidence>
<evidence type="ECO:0007744" key="12">
    <source>
        <dbReference type="PDB" id="5ADX"/>
    </source>
</evidence>
<evidence type="ECO:0007744" key="13">
    <source>
        <dbReference type="PDB" id="5AFU"/>
    </source>
</evidence>
<evidence type="ECO:0007744" key="14">
    <source>
        <dbReference type="PDB" id="6F1T"/>
    </source>
</evidence>
<evidence type="ECO:0007744" key="15">
    <source>
        <dbReference type="PDB" id="6F1U"/>
    </source>
</evidence>
<evidence type="ECO:0007744" key="16">
    <source>
        <dbReference type="PDB" id="6ZNL"/>
    </source>
</evidence>
<evidence type="ECO:0007744" key="17">
    <source>
        <dbReference type="PDB" id="6ZNM"/>
    </source>
</evidence>
<evidence type="ECO:0007744" key="18">
    <source>
        <dbReference type="PDB" id="6ZNN"/>
    </source>
</evidence>
<evidence type="ECO:0007744" key="19">
    <source>
        <dbReference type="PDB" id="6ZNO"/>
    </source>
</evidence>
<evidence type="ECO:0007744" key="20">
    <source>
        <dbReference type="PDB" id="6ZO4"/>
    </source>
</evidence>
<evidence type="ECO:0007744" key="21">
    <source>
        <dbReference type="PDB" id="7Z8F"/>
    </source>
</evidence>
<evidence type="ECO:0007829" key="22">
    <source>
        <dbReference type="PDB" id="6F1T"/>
    </source>
</evidence>
<evidence type="ECO:0007829" key="23">
    <source>
        <dbReference type="PDB" id="6F1U"/>
    </source>
</evidence>
<evidence type="ECO:0007829" key="24">
    <source>
        <dbReference type="PDB" id="7Z8M"/>
    </source>
</evidence>
<keyword id="KW-0002">3D-structure</keyword>
<keyword id="KW-0007">Acetylation</keyword>
<keyword id="KW-0175">Coiled coil</keyword>
<keyword id="KW-0963">Cytoplasm</keyword>
<keyword id="KW-0206">Cytoskeleton</keyword>
<keyword id="KW-0243">Dynein</keyword>
<keyword id="KW-0472">Membrane</keyword>
<keyword id="KW-0493">Microtubule</keyword>
<keyword id="KW-0597">Phosphoprotein</keyword>
<keyword id="KW-1185">Reference proteome</keyword>
<protein>
    <recommendedName>
        <fullName>Dynactin subunit 2</fullName>
    </recommendedName>
</protein>
<proteinExistence type="evidence at protein level"/>